<gene>
    <name evidence="1" type="primary">pyrH</name>
    <name type="ordered locus">MYPE9570</name>
</gene>
<organism>
    <name type="scientific">Malacoplasma penetrans (strain HF-2)</name>
    <name type="common">Mycoplasma penetrans</name>
    <dbReference type="NCBI Taxonomy" id="272633"/>
    <lineage>
        <taxon>Bacteria</taxon>
        <taxon>Bacillati</taxon>
        <taxon>Mycoplasmatota</taxon>
        <taxon>Mycoplasmoidales</taxon>
        <taxon>Mycoplasmoidaceae</taxon>
        <taxon>Malacoplasma</taxon>
    </lineage>
</organism>
<feature type="chain" id="PRO_0000323898" description="Uridylate kinase">
    <location>
        <begin position="1"/>
        <end position="317"/>
    </location>
</feature>
<feature type="binding site" evidence="1">
    <location>
        <begin position="9"/>
        <end position="12"/>
    </location>
    <ligand>
        <name>ATP</name>
        <dbReference type="ChEBI" id="CHEBI:30616"/>
    </ligand>
</feature>
<feature type="binding site" evidence="1">
    <location>
        <position position="49"/>
    </location>
    <ligand>
        <name>UMP</name>
        <dbReference type="ChEBI" id="CHEBI:57865"/>
    </ligand>
</feature>
<feature type="binding site" evidence="1">
    <location>
        <position position="50"/>
    </location>
    <ligand>
        <name>ATP</name>
        <dbReference type="ChEBI" id="CHEBI:30616"/>
    </ligand>
</feature>
<feature type="binding site" evidence="1">
    <location>
        <position position="54"/>
    </location>
    <ligand>
        <name>ATP</name>
        <dbReference type="ChEBI" id="CHEBI:30616"/>
    </ligand>
</feature>
<feature type="binding site" evidence="1">
    <location>
        <position position="69"/>
    </location>
    <ligand>
        <name>UMP</name>
        <dbReference type="ChEBI" id="CHEBI:57865"/>
    </ligand>
</feature>
<feature type="binding site" evidence="1">
    <location>
        <begin position="130"/>
        <end position="137"/>
    </location>
    <ligand>
        <name>UMP</name>
        <dbReference type="ChEBI" id="CHEBI:57865"/>
    </ligand>
</feature>
<feature type="binding site" evidence="1">
    <location>
        <position position="158"/>
    </location>
    <ligand>
        <name>ATP</name>
        <dbReference type="ChEBI" id="CHEBI:30616"/>
    </ligand>
</feature>
<feature type="binding site" evidence="1">
    <location>
        <position position="164"/>
    </location>
    <ligand>
        <name>ATP</name>
        <dbReference type="ChEBI" id="CHEBI:30616"/>
    </ligand>
</feature>
<feature type="binding site" evidence="1">
    <location>
        <position position="167"/>
    </location>
    <ligand>
        <name>ATP</name>
        <dbReference type="ChEBI" id="CHEBI:30616"/>
    </ligand>
</feature>
<evidence type="ECO:0000255" key="1">
    <source>
        <dbReference type="HAMAP-Rule" id="MF_01220"/>
    </source>
</evidence>
<name>PYRH_MALP2</name>
<sequence>MNKELVILKISGASLKGKNDIIDLDFLREIGRQIKVLSNNYKVAIVLGGGNIWRGNIAKEIGMQRYKADQMGMLATVMNSLALQSLLTNINVKSRIFSTIEMEKIADSYIIRNLEESLNNNEIAILSCGTGRPYFTTDTGVAVSAAELGASYIMMGKNNVDGVYDSDPNKNPNAKFYKHLTYSKAIELGLEVMDITAATICKQSNIKTIVFKMNEKNGILNAFENKSKFTLVSEDEKDLDAFKFGIKNIKNNSEKSSNNWDNKVIDIKTIKEENSLNIDDIFENSIEELQKLKEDDIQKNQKKLNEIIKSFYQDNKE</sequence>
<reference key="1">
    <citation type="journal article" date="2002" name="Nucleic Acids Res.">
        <title>The complete genomic sequence of Mycoplasma penetrans, an intracellular bacterial pathogen in humans.</title>
        <authorList>
            <person name="Sasaki Y."/>
            <person name="Ishikawa J."/>
            <person name="Yamashita A."/>
            <person name="Oshima K."/>
            <person name="Kenri T."/>
            <person name="Furuya K."/>
            <person name="Yoshino C."/>
            <person name="Horino A."/>
            <person name="Shiba T."/>
            <person name="Sasaki T."/>
            <person name="Hattori M."/>
        </authorList>
    </citation>
    <scope>NUCLEOTIDE SEQUENCE [LARGE SCALE GENOMIC DNA]</scope>
    <source>
        <strain>HF-2</strain>
    </source>
</reference>
<proteinExistence type="inferred from homology"/>
<protein>
    <recommendedName>
        <fullName evidence="1">Uridylate kinase</fullName>
        <shortName evidence="1">UK</shortName>
        <ecNumber evidence="1">2.7.4.22</ecNumber>
    </recommendedName>
    <alternativeName>
        <fullName evidence="1">Uridine monophosphate kinase</fullName>
        <shortName evidence="1">UMP kinase</shortName>
        <shortName evidence="1">UMPK</shortName>
    </alternativeName>
</protein>
<dbReference type="EC" id="2.7.4.22" evidence="1"/>
<dbReference type="EMBL" id="BA000026">
    <property type="protein sequence ID" value="BAC44744.1"/>
    <property type="molecule type" value="Genomic_DNA"/>
</dbReference>
<dbReference type="RefSeq" id="WP_011077773.1">
    <property type="nucleotide sequence ID" value="NC_004432.1"/>
</dbReference>
<dbReference type="SMR" id="Q8EUG9"/>
<dbReference type="FunCoup" id="Q8EUG9">
    <property type="interactions" value="279"/>
</dbReference>
<dbReference type="STRING" id="272633.gene:10732078"/>
<dbReference type="KEGG" id="mpe:MYPE9570"/>
<dbReference type="eggNOG" id="COG0528">
    <property type="taxonomic scope" value="Bacteria"/>
</dbReference>
<dbReference type="HOGENOM" id="CLU_033861_0_1_14"/>
<dbReference type="InParanoid" id="Q8EUG9"/>
<dbReference type="UniPathway" id="UPA00159">
    <property type="reaction ID" value="UER00275"/>
</dbReference>
<dbReference type="Proteomes" id="UP000002522">
    <property type="component" value="Chromosome"/>
</dbReference>
<dbReference type="GO" id="GO:0005737">
    <property type="term" value="C:cytoplasm"/>
    <property type="evidence" value="ECO:0007669"/>
    <property type="project" value="UniProtKB-SubCell"/>
</dbReference>
<dbReference type="GO" id="GO:0005524">
    <property type="term" value="F:ATP binding"/>
    <property type="evidence" value="ECO:0007669"/>
    <property type="project" value="UniProtKB-KW"/>
</dbReference>
<dbReference type="GO" id="GO:0033862">
    <property type="term" value="F:UMP kinase activity"/>
    <property type="evidence" value="ECO:0007669"/>
    <property type="project" value="UniProtKB-EC"/>
</dbReference>
<dbReference type="GO" id="GO:0044210">
    <property type="term" value="P:'de novo' CTP biosynthetic process"/>
    <property type="evidence" value="ECO:0007669"/>
    <property type="project" value="UniProtKB-UniRule"/>
</dbReference>
<dbReference type="GO" id="GO:0006225">
    <property type="term" value="P:UDP biosynthetic process"/>
    <property type="evidence" value="ECO:0007669"/>
    <property type="project" value="TreeGrafter"/>
</dbReference>
<dbReference type="CDD" id="cd04254">
    <property type="entry name" value="AAK_UMPK-PyrH-Ec"/>
    <property type="match status" value="1"/>
</dbReference>
<dbReference type="FunFam" id="3.40.1160.10:FF:000001">
    <property type="entry name" value="Uridylate kinase"/>
    <property type="match status" value="1"/>
</dbReference>
<dbReference type="Gene3D" id="3.40.1160.10">
    <property type="entry name" value="Acetylglutamate kinase-like"/>
    <property type="match status" value="1"/>
</dbReference>
<dbReference type="HAMAP" id="MF_01220_B">
    <property type="entry name" value="PyrH_B"/>
    <property type="match status" value="1"/>
</dbReference>
<dbReference type="InterPro" id="IPR036393">
    <property type="entry name" value="AceGlu_kinase-like_sf"/>
</dbReference>
<dbReference type="InterPro" id="IPR001048">
    <property type="entry name" value="Asp/Glu/Uridylate_kinase"/>
</dbReference>
<dbReference type="InterPro" id="IPR015963">
    <property type="entry name" value="Uridylate_kinase_bac"/>
</dbReference>
<dbReference type="NCBIfam" id="TIGR02075">
    <property type="entry name" value="pyrH_bact"/>
    <property type="match status" value="1"/>
</dbReference>
<dbReference type="PANTHER" id="PTHR42833">
    <property type="entry name" value="URIDYLATE KINASE"/>
    <property type="match status" value="1"/>
</dbReference>
<dbReference type="PANTHER" id="PTHR42833:SF4">
    <property type="entry name" value="URIDYLATE KINASE PUMPKIN, CHLOROPLASTIC"/>
    <property type="match status" value="1"/>
</dbReference>
<dbReference type="Pfam" id="PF00696">
    <property type="entry name" value="AA_kinase"/>
    <property type="match status" value="1"/>
</dbReference>
<dbReference type="SUPFAM" id="SSF53633">
    <property type="entry name" value="Carbamate kinase-like"/>
    <property type="match status" value="1"/>
</dbReference>
<accession>Q8EUG9</accession>
<keyword id="KW-0067">ATP-binding</keyword>
<keyword id="KW-0963">Cytoplasm</keyword>
<keyword id="KW-0418">Kinase</keyword>
<keyword id="KW-0547">Nucleotide-binding</keyword>
<keyword id="KW-0665">Pyrimidine biosynthesis</keyword>
<keyword id="KW-1185">Reference proteome</keyword>
<keyword id="KW-0808">Transferase</keyword>
<comment type="function">
    <text evidence="1">Catalyzes the reversible phosphorylation of UMP to UDP.</text>
</comment>
<comment type="catalytic activity">
    <reaction evidence="1">
        <text>UMP + ATP = UDP + ADP</text>
        <dbReference type="Rhea" id="RHEA:24400"/>
        <dbReference type="ChEBI" id="CHEBI:30616"/>
        <dbReference type="ChEBI" id="CHEBI:57865"/>
        <dbReference type="ChEBI" id="CHEBI:58223"/>
        <dbReference type="ChEBI" id="CHEBI:456216"/>
        <dbReference type="EC" id="2.7.4.22"/>
    </reaction>
</comment>
<comment type="activity regulation">
    <text evidence="1">Inhibited by UTP.</text>
</comment>
<comment type="pathway">
    <text evidence="1">Pyrimidine metabolism; CTP biosynthesis via de novo pathway; UDP from UMP (UMPK route): step 1/1.</text>
</comment>
<comment type="subunit">
    <text evidence="1">Homohexamer.</text>
</comment>
<comment type="subcellular location">
    <subcellularLocation>
        <location evidence="1">Cytoplasm</location>
    </subcellularLocation>
</comment>
<comment type="similarity">
    <text evidence="1">Belongs to the UMP kinase family.</text>
</comment>